<feature type="chain" id="PRO_0000147001" description="Tyrosine/DOPA decarboxylase 3">
    <location>
        <begin position="1"/>
        <end position="533"/>
    </location>
</feature>
<feature type="modified residue" description="N6-(pyridoxal phosphate)lysine" evidence="1">
    <location>
        <position position="319"/>
    </location>
</feature>
<gene>
    <name type="primary">TYDC3</name>
</gene>
<comment type="function">
    <text>Marginally higher substrate specificity for L-DOPA over L-tyrosine.</text>
</comment>
<comment type="catalytic activity">
    <reaction>
        <text>L-tyrosine + H(+) = tyramine + CO2</text>
        <dbReference type="Rhea" id="RHEA:14345"/>
        <dbReference type="ChEBI" id="CHEBI:15378"/>
        <dbReference type="ChEBI" id="CHEBI:16526"/>
        <dbReference type="ChEBI" id="CHEBI:58315"/>
        <dbReference type="ChEBI" id="CHEBI:327995"/>
        <dbReference type="EC" id="4.1.1.25"/>
    </reaction>
</comment>
<comment type="catalytic activity">
    <reaction>
        <text>L-dopa + H(+) = dopamine + CO2</text>
        <dbReference type="Rhea" id="RHEA:12272"/>
        <dbReference type="ChEBI" id="CHEBI:15378"/>
        <dbReference type="ChEBI" id="CHEBI:16526"/>
        <dbReference type="ChEBI" id="CHEBI:57504"/>
        <dbReference type="ChEBI" id="CHEBI:59905"/>
        <dbReference type="EC" id="4.1.1.28"/>
    </reaction>
</comment>
<comment type="catalytic activity">
    <reaction>
        <text>5-hydroxy-L-tryptophan + H(+) = serotonin + CO2</text>
        <dbReference type="Rhea" id="RHEA:18533"/>
        <dbReference type="ChEBI" id="CHEBI:15378"/>
        <dbReference type="ChEBI" id="CHEBI:16526"/>
        <dbReference type="ChEBI" id="CHEBI:58266"/>
        <dbReference type="ChEBI" id="CHEBI:350546"/>
        <dbReference type="EC" id="4.1.1.28"/>
    </reaction>
</comment>
<comment type="cofactor">
    <cofactor>
        <name>pyridoxal 5'-phosphate</name>
        <dbReference type="ChEBI" id="CHEBI:597326"/>
    </cofactor>
</comment>
<comment type="subunit">
    <text evidence="1">Homodimer.</text>
</comment>
<comment type="tissue specificity">
    <text evidence="2">Roots.</text>
</comment>
<comment type="developmental stage">
    <text evidence="2">Seedlings and mature plants.</text>
</comment>
<comment type="induction">
    <text evidence="2">By fungal elicitor.</text>
</comment>
<comment type="similarity">
    <text evidence="3">Belongs to the group II decarboxylase family.</text>
</comment>
<protein>
    <recommendedName>
        <fullName>Tyrosine/DOPA decarboxylase 3</fullName>
    </recommendedName>
    <domain>
        <recommendedName>
            <fullName>DOPA decarboxylase</fullName>
            <shortName>DDC</shortName>
            <ecNumber>4.1.1.28</ecNumber>
        </recommendedName>
    </domain>
    <domain>
        <recommendedName>
            <fullName>Tyrosine decarboxylase</fullName>
            <ecNumber>4.1.1.25</ecNumber>
        </recommendedName>
    </domain>
</protein>
<proteinExistence type="evidence at transcript level"/>
<organism>
    <name type="scientific">Papaver somniferum</name>
    <name type="common">Opium poppy</name>
    <dbReference type="NCBI Taxonomy" id="3469"/>
    <lineage>
        <taxon>Eukaryota</taxon>
        <taxon>Viridiplantae</taxon>
        <taxon>Streptophyta</taxon>
        <taxon>Embryophyta</taxon>
        <taxon>Tracheophyta</taxon>
        <taxon>Spermatophyta</taxon>
        <taxon>Magnoliopsida</taxon>
        <taxon>Ranunculales</taxon>
        <taxon>Papaveraceae</taxon>
        <taxon>Papaveroideae</taxon>
        <taxon>Papaver</taxon>
    </lineage>
</organism>
<reference key="1">
    <citation type="journal article" date="1998" name="Plant Physiol.">
        <title>Expression patterns conferred by tyrosine/dihydroxyphenylalanine decarboxylase promoters from opium poppy are conserved in transgenic tobacco.</title>
        <authorList>
            <person name="Facchini P.J."/>
            <person name="Penzes-Yost C."/>
            <person name="Samanani N."/>
            <person name="Kowalchuk B."/>
        </authorList>
    </citation>
    <scope>NUCLEOTIDE SEQUENCE [GENOMIC DNA]</scope>
    <scope>TISSUE SPECIFICITY</scope>
    <scope>DEVELOPMENTAL STAGE</scope>
    <scope>INDUCTION</scope>
    <source>
        <strain>cv. Marianne</strain>
        <tissue>Leaf</tissue>
    </source>
</reference>
<reference key="2">
    <citation type="journal article" date="1994" name="J. Biol. Chem.">
        <title>Differential and tissue-specific expression of a gene family for tyrosine/dopa decarboxylase in opium poppy.</title>
        <authorList>
            <person name="Facchini P.J."/>
            <person name="de Luca V."/>
        </authorList>
    </citation>
    <scope>NUCLEOTIDE SEQUENCE [MRNA] OF 175-533</scope>
    <source>
        <strain>cv. Marianne</strain>
    </source>
</reference>
<dbReference type="EC" id="4.1.1.28"/>
<dbReference type="EC" id="4.1.1.25"/>
<dbReference type="EMBL" id="AF025431">
    <property type="protein sequence ID" value="AAC61840.1"/>
    <property type="molecule type" value="Genomic_DNA"/>
</dbReference>
<dbReference type="EMBL" id="U08599">
    <property type="protein sequence ID" value="AAA62348.1"/>
    <property type="molecule type" value="mRNA"/>
</dbReference>
<dbReference type="PIR" id="C55066">
    <property type="entry name" value="C55066"/>
</dbReference>
<dbReference type="PIR" id="T07970">
    <property type="entry name" value="T07970"/>
</dbReference>
<dbReference type="SMR" id="P54770"/>
<dbReference type="GO" id="GO:0005737">
    <property type="term" value="C:cytoplasm"/>
    <property type="evidence" value="ECO:0007669"/>
    <property type="project" value="TreeGrafter"/>
</dbReference>
<dbReference type="GO" id="GO:0036467">
    <property type="term" value="F:5-hydroxy-L-tryptophan decarboxylase activity"/>
    <property type="evidence" value="ECO:0007669"/>
    <property type="project" value="RHEA"/>
</dbReference>
<dbReference type="GO" id="GO:0036468">
    <property type="term" value="F:L-dopa decarboxylase activity"/>
    <property type="evidence" value="ECO:0007669"/>
    <property type="project" value="RHEA"/>
</dbReference>
<dbReference type="GO" id="GO:0030170">
    <property type="term" value="F:pyridoxal phosphate binding"/>
    <property type="evidence" value="ECO:0007669"/>
    <property type="project" value="InterPro"/>
</dbReference>
<dbReference type="GO" id="GO:0004837">
    <property type="term" value="F:tyrosine decarboxylase activity"/>
    <property type="evidence" value="ECO:0007669"/>
    <property type="project" value="UniProtKB-EC"/>
</dbReference>
<dbReference type="GO" id="GO:0006520">
    <property type="term" value="P:amino acid metabolic process"/>
    <property type="evidence" value="ECO:0007669"/>
    <property type="project" value="InterPro"/>
</dbReference>
<dbReference type="GO" id="GO:0019752">
    <property type="term" value="P:carboxylic acid metabolic process"/>
    <property type="evidence" value="ECO:0007669"/>
    <property type="project" value="InterPro"/>
</dbReference>
<dbReference type="CDD" id="cd06450">
    <property type="entry name" value="DOPA_deC_like"/>
    <property type="match status" value="1"/>
</dbReference>
<dbReference type="FunFam" id="1.20.1340.10:FF:000001">
    <property type="entry name" value="Histidine decarboxylase"/>
    <property type="match status" value="1"/>
</dbReference>
<dbReference type="FunFam" id="3.40.640.10:FF:000025">
    <property type="entry name" value="Histidine decarboxylase"/>
    <property type="match status" value="1"/>
</dbReference>
<dbReference type="Gene3D" id="3.90.1150.10">
    <property type="entry name" value="Aspartate Aminotransferase, domain 1"/>
    <property type="match status" value="1"/>
</dbReference>
<dbReference type="Gene3D" id="1.20.1340.10">
    <property type="entry name" value="dopa decarboxylase, N-terminal domain"/>
    <property type="match status" value="1"/>
</dbReference>
<dbReference type="Gene3D" id="3.40.640.10">
    <property type="entry name" value="Type I PLP-dependent aspartate aminotransferase-like (Major domain)"/>
    <property type="match status" value="1"/>
</dbReference>
<dbReference type="InterPro" id="IPR010977">
    <property type="entry name" value="Aromatic_deC"/>
</dbReference>
<dbReference type="InterPro" id="IPR002129">
    <property type="entry name" value="PyrdxlP-dep_de-COase"/>
</dbReference>
<dbReference type="InterPro" id="IPR015424">
    <property type="entry name" value="PyrdxlP-dep_Trfase"/>
</dbReference>
<dbReference type="InterPro" id="IPR015421">
    <property type="entry name" value="PyrdxlP-dep_Trfase_major"/>
</dbReference>
<dbReference type="InterPro" id="IPR015422">
    <property type="entry name" value="PyrdxlP-dep_Trfase_small"/>
</dbReference>
<dbReference type="InterPro" id="IPR021115">
    <property type="entry name" value="Pyridoxal-P_BS"/>
</dbReference>
<dbReference type="PANTHER" id="PTHR11999">
    <property type="entry name" value="GROUP II PYRIDOXAL-5-PHOSPHATE DECARBOXYLASE"/>
    <property type="match status" value="1"/>
</dbReference>
<dbReference type="PANTHER" id="PTHR11999:SF96">
    <property type="entry name" value="TYROSINE DECARBOXYLASE"/>
    <property type="match status" value="1"/>
</dbReference>
<dbReference type="Pfam" id="PF00282">
    <property type="entry name" value="Pyridoxal_deC"/>
    <property type="match status" value="1"/>
</dbReference>
<dbReference type="PRINTS" id="PR00800">
    <property type="entry name" value="YHDCRBOXLASE"/>
</dbReference>
<dbReference type="SUPFAM" id="SSF53383">
    <property type="entry name" value="PLP-dependent transferases"/>
    <property type="match status" value="1"/>
</dbReference>
<dbReference type="PROSITE" id="PS00392">
    <property type="entry name" value="DDC_GAD_HDC_YDC"/>
    <property type="match status" value="1"/>
</dbReference>
<sequence length="533" mass="59520">MGSLNTEDVLEHSSAFGATNPLDPEEFRRQGHMIIDFLADYYRDVEKYPVRSQVEPGYLRKRLPETAPYNPESIETILQDVTSEIIPGLTHWQSPNYYAYFPSSGSVAGFLGEMLSTGFNVVGFNWMSSPAATELEGIVMDWFGKMLNLPKSYLFSGTGGGVLQGTTCEAILCTLTAARDRKLNKIGREHIGRLVVYGSDQTHCALQKAAQIAGINPKNFRAVKTFKANSFGLAASTLREVILEDIEAGLIPLFVCPTVGTTSSTAVDPIGPICEVAKEYEMWVHIDAAYAGSACICPEFRHFIDGVEEADSFSLNAHKWFFTTLDCCCLWVKDPSSLVKALSTNPEYLRNKATESRQVVDYKDWQIALIRRFRSMKLWMVLRSYGVTNLRNFLRSHVRMAKTFEGLVGADRRFEITVPRTFAMVCFRLLPPTTVKVCGENGVHQNGNGVIAVLRNENEELVLANKLNQVYLRQVKATGSVYMTHAVVGGVYMIRFAVGSTLTEERHVIHAWEVLQEHADLILSKFDEANFSS</sequence>
<keyword id="KW-0210">Decarboxylase</keyword>
<keyword id="KW-0456">Lyase</keyword>
<keyword id="KW-0663">Pyridoxal phosphate</keyword>
<accession>P54770</accession>
<evidence type="ECO:0000250" key="1"/>
<evidence type="ECO:0000269" key="2">
    <source>
    </source>
</evidence>
<evidence type="ECO:0000305" key="3"/>
<name>TYDC3_PAPSO</name>